<keyword id="KW-1185">Reference proteome</keyword>
<protein>
    <recommendedName>
        <fullName>Uncharacterized protein Mb2235</fullName>
    </recommendedName>
</protein>
<evidence type="ECO:0000255" key="1">
    <source>
        <dbReference type="PROSITE-ProRule" id="PRU00099"/>
    </source>
</evidence>
<reference key="1">
    <citation type="journal article" date="2003" name="Proc. Natl. Acad. Sci. U.S.A.">
        <title>The complete genome sequence of Mycobacterium bovis.</title>
        <authorList>
            <person name="Garnier T."/>
            <person name="Eiglmeier K."/>
            <person name="Camus J.-C."/>
            <person name="Medina N."/>
            <person name="Mansoor H."/>
            <person name="Pryor M."/>
            <person name="Duthoy S."/>
            <person name="Grondin S."/>
            <person name="Lacroix C."/>
            <person name="Monsempe C."/>
            <person name="Simon S."/>
            <person name="Harris B."/>
            <person name="Atkin R."/>
            <person name="Doggett J."/>
            <person name="Mayes R."/>
            <person name="Keating L."/>
            <person name="Wheeler P.R."/>
            <person name="Parkhill J."/>
            <person name="Barrell B.G."/>
            <person name="Cole S.T."/>
            <person name="Gordon S.V."/>
            <person name="Hewinson R.G."/>
        </authorList>
    </citation>
    <scope>NUCLEOTIDE SEQUENCE [LARGE SCALE GENOMIC DNA]</scope>
    <source>
        <strain>ATCC BAA-935 / AF2122/97</strain>
    </source>
</reference>
<reference key="2">
    <citation type="journal article" date="2017" name="Genome Announc.">
        <title>Updated reference genome sequence and annotation of Mycobacterium bovis AF2122/97.</title>
        <authorList>
            <person name="Malone K.M."/>
            <person name="Farrell D."/>
            <person name="Stuber T.P."/>
            <person name="Schubert O.T."/>
            <person name="Aebersold R."/>
            <person name="Robbe-Austerman S."/>
            <person name="Gordon S.V."/>
        </authorList>
    </citation>
    <scope>NUCLEOTIDE SEQUENCE [LARGE SCALE GENOMIC DNA]</scope>
    <scope>GENOME REANNOTATION</scope>
    <source>
        <strain>ATCC BAA-935 / AF2122/97</strain>
    </source>
</reference>
<name>Y2235_MYCBO</name>
<accession>P64266</accession>
<accession>A0A1R3Y0I6</accession>
<accession>Q10400</accession>
<accession>X2BK46</accession>
<comment type="similarity">
    <text evidence="1">Belongs to the adenylyl cyclase class-4/guanylyl cyclase family.</text>
</comment>
<dbReference type="EMBL" id="LT708304">
    <property type="protein sequence ID" value="SIU00843.1"/>
    <property type="molecule type" value="Genomic_DNA"/>
</dbReference>
<dbReference type="RefSeq" id="NP_855884.1">
    <property type="nucleotide sequence ID" value="NC_002945.3"/>
</dbReference>
<dbReference type="RefSeq" id="WP_003411442.1">
    <property type="nucleotide sequence ID" value="NC_002945.4"/>
</dbReference>
<dbReference type="SMR" id="P64266"/>
<dbReference type="KEGG" id="mbo:BQ2027_MB2235"/>
<dbReference type="PATRIC" id="fig|233413.5.peg.2451"/>
<dbReference type="Proteomes" id="UP000001419">
    <property type="component" value="Chromosome"/>
</dbReference>
<dbReference type="GO" id="GO:0004016">
    <property type="term" value="F:adenylate cyclase activity"/>
    <property type="evidence" value="ECO:0007669"/>
    <property type="project" value="UniProtKB-ARBA"/>
</dbReference>
<dbReference type="GO" id="GO:0009190">
    <property type="term" value="P:cyclic nucleotide biosynthetic process"/>
    <property type="evidence" value="ECO:0007669"/>
    <property type="project" value="InterPro"/>
</dbReference>
<dbReference type="GO" id="GO:0035556">
    <property type="term" value="P:intracellular signal transduction"/>
    <property type="evidence" value="ECO:0007669"/>
    <property type="project" value="InterPro"/>
</dbReference>
<dbReference type="CDD" id="cd07302">
    <property type="entry name" value="CHD"/>
    <property type="match status" value="1"/>
</dbReference>
<dbReference type="Gene3D" id="3.30.70.1230">
    <property type="entry name" value="Nucleotide cyclase"/>
    <property type="match status" value="1"/>
</dbReference>
<dbReference type="InterPro" id="IPR001054">
    <property type="entry name" value="A/G_cyclase"/>
</dbReference>
<dbReference type="InterPro" id="IPR050697">
    <property type="entry name" value="Adenylyl/Guanylyl_Cyclase_3/4"/>
</dbReference>
<dbReference type="InterPro" id="IPR029787">
    <property type="entry name" value="Nucleotide_cyclase"/>
</dbReference>
<dbReference type="PANTHER" id="PTHR43081:SF1">
    <property type="entry name" value="ADENYLATE CYCLASE, TERMINAL-DIFFERENTIATION SPECIFIC"/>
    <property type="match status" value="1"/>
</dbReference>
<dbReference type="PANTHER" id="PTHR43081">
    <property type="entry name" value="ADENYLATE CYCLASE, TERMINAL-DIFFERENTIATION SPECIFIC-RELATED"/>
    <property type="match status" value="1"/>
</dbReference>
<dbReference type="Pfam" id="PF00211">
    <property type="entry name" value="Guanylate_cyc"/>
    <property type="match status" value="1"/>
</dbReference>
<dbReference type="SMART" id="SM00044">
    <property type="entry name" value="CYCc"/>
    <property type="match status" value="1"/>
</dbReference>
<dbReference type="SUPFAM" id="SSF55073">
    <property type="entry name" value="Nucleotide cyclase"/>
    <property type="match status" value="1"/>
</dbReference>
<dbReference type="PROSITE" id="PS50125">
    <property type="entry name" value="GUANYLATE_CYCLASE_2"/>
    <property type="match status" value="1"/>
</dbReference>
<gene>
    <name type="ordered locus">BQ2027_MB2235</name>
</gene>
<organism>
    <name type="scientific">Mycobacterium bovis (strain ATCC BAA-935 / AF2122/97)</name>
    <dbReference type="NCBI Taxonomy" id="233413"/>
    <lineage>
        <taxon>Bacteria</taxon>
        <taxon>Bacillati</taxon>
        <taxon>Actinomycetota</taxon>
        <taxon>Actinomycetes</taxon>
        <taxon>Mycobacteriales</taxon>
        <taxon>Mycobacteriaceae</taxon>
        <taxon>Mycobacterium</taxon>
        <taxon>Mycobacterium tuberculosis complex</taxon>
    </lineage>
</organism>
<sequence length="378" mass="39775">MYDSLDFDALEAAGIANPRERAGLLTYLDELGFTVEEMVQAERRGRLFGLAGDVLLWSGPPIYTLATAADELGLSADDVARAWSLLGLTVAGPDVPTLSQADVDALATWVALKALVGEDGAFGLLRVLGTAMARLAEAESTMIRAGSPNIQMTHTHDELATARAYRAAAEFVPRIGALIDTVHRHHLASARTYFEGVIGDTSASVTCGIGFADLSSFTALTQALTPAQLQDLLTEFDAAVTDVVHADGGRLVKFIGDAVMWVSSSPERLVRAAVDLVDHPGARAAELQVRAGLAYGTVLALNGDYFGNPVNLAARLVAAAAPGQILAAAQLRDMLPDWPALAHGPLTLKGFDAPVMAFELHDNPRARDADTPSPAASD</sequence>
<proteinExistence type="inferred from homology"/>
<feature type="chain" id="PRO_0000074133" description="Uncharacterized protein Mb2235">
    <location>
        <begin position="1"/>
        <end position="378"/>
    </location>
</feature>
<feature type="domain" description="Guanylate cyclase" evidence="1">
    <location>
        <begin position="208"/>
        <end position="317"/>
    </location>
</feature>